<proteinExistence type="evidence at protein level"/>
<comment type="function">
    <text evidence="7 8 9 10">E3 ubiquitin-protein ligase which accepts ubiquitin from an E2 ubiquitin-conjugating enzyme in the form of a thioester and then directly transfers the ubiquitin to targeted substrates. Polyubiquitinates POU5F1 by 'Lys-63'-linked conjugation and promotes it to proteasomal degradation; regulates POU5F1 protein level during differentiation of embryonal carcinoma cells (ECCs) but not in undifferentiated ECCs and embryonic stem cells (ESCs). Ubiquitinates EGR2 and promotes it to proteasomal degradation; in T-cells the ubiquitination inhibits activation-induced cell death. Ubiquitinates SLC11A2; the ubiquitination is enhanced by presence of NDFIP1 and NDFIP2. Ubiquitinates RPB1 and promotes it to proteasomal degradation.</text>
</comment>
<comment type="catalytic activity">
    <reaction>
        <text>S-ubiquitinyl-[E2 ubiquitin-conjugating enzyme]-L-cysteine + [acceptor protein]-L-lysine = [E2 ubiquitin-conjugating enzyme]-L-cysteine + N(6)-ubiquitinyl-[acceptor protein]-L-lysine.</text>
        <dbReference type="EC" id="2.3.2.26"/>
    </reaction>
</comment>
<comment type="activity regulation">
    <text evidence="1">Activated by NDFIP1- and NDFIP2-binding.</text>
</comment>
<comment type="pathway">
    <text>Protein modification; protein ubiquitination.</text>
</comment>
<comment type="subunit">
    <text evidence="2 7 8 9">Interacts with SCNN1A, SCNN1B, SCNN1G, WBP1, WBP2 and ATN1. Interacts with ERBB4, NDFIP1 and NDFIP2. Interacts with ARRDC4 (By similarity). Interacts with POU5F1, RBP1, EGR2 and SLC11A2. Interacts (via WW domains) with ARRDC1 (via PPxY motifs); ubiquitinates ARRDC1 (By similarity). Interacts (via WW domains) with ARRDC2 and ARRDC3 (By similarity).</text>
</comment>
<comment type="subcellular location">
    <subcellularLocation>
        <location evidence="2">Nucleus</location>
    </subcellularLocation>
</comment>
<comment type="domain">
    <text evidence="1">The C2 domain is involved in autoinhibition of the catalytic activity by interacting with the HECT domain.</text>
</comment>
<comment type="domain">
    <text evidence="2">The WW domains mediate interaction with PPxY motif-containing proteins.</text>
</comment>
<comment type="PTM">
    <text evidence="1">Autoubiquitinated. Ubiquitinated by the SCF(FBXL15) complex, leading to its degradation by the proteasome (By similarity).</text>
</comment>
<comment type="miscellaneous">
    <text>A cysteine residue is required for ubiquitin-thioester formation.</text>
</comment>
<feature type="chain" id="PRO_0000120339" description="NEDD4-like E3 ubiquitin-protein ligase WWP2">
    <location>
        <begin position="1"/>
        <end position="870"/>
    </location>
</feature>
<feature type="domain" description="C2" evidence="3">
    <location>
        <begin position="1"/>
        <end position="117"/>
    </location>
</feature>
<feature type="domain" description="WW 1" evidence="5">
    <location>
        <begin position="300"/>
        <end position="333"/>
    </location>
</feature>
<feature type="domain" description="WW 2" evidence="5">
    <location>
        <begin position="330"/>
        <end position="363"/>
    </location>
</feature>
<feature type="domain" description="WW 3" evidence="5">
    <location>
        <begin position="405"/>
        <end position="437"/>
    </location>
</feature>
<feature type="domain" description="WW 4" evidence="5">
    <location>
        <begin position="444"/>
        <end position="477"/>
    </location>
</feature>
<feature type="domain" description="HECT" evidence="4">
    <location>
        <begin position="536"/>
        <end position="870"/>
    </location>
</feature>
<feature type="region of interest" description="Disordered" evidence="6">
    <location>
        <begin position="150"/>
        <end position="300"/>
    </location>
</feature>
<feature type="compositionally biased region" description="Polar residues" evidence="6">
    <location>
        <begin position="152"/>
        <end position="171"/>
    </location>
</feature>
<feature type="compositionally biased region" description="Low complexity" evidence="6">
    <location>
        <begin position="198"/>
        <end position="208"/>
    </location>
</feature>
<feature type="compositionally biased region" description="Polar residues" evidence="6">
    <location>
        <begin position="222"/>
        <end position="235"/>
    </location>
</feature>
<feature type="compositionally biased region" description="Polar residues" evidence="6">
    <location>
        <begin position="262"/>
        <end position="289"/>
    </location>
</feature>
<feature type="compositionally biased region" description="Low complexity" evidence="6">
    <location>
        <begin position="290"/>
        <end position="300"/>
    </location>
</feature>
<feature type="active site" description="Glycyl thioester intermediate" evidence="4">
    <location>
        <position position="838"/>
    </location>
</feature>
<feature type="modified residue" description="Phosphoserine" evidence="2">
    <location>
        <position position="211"/>
    </location>
</feature>
<evidence type="ECO:0000250" key="1"/>
<evidence type="ECO:0000250" key="2">
    <source>
        <dbReference type="UniProtKB" id="O00308"/>
    </source>
</evidence>
<evidence type="ECO:0000255" key="3">
    <source>
        <dbReference type="PROSITE-ProRule" id="PRU00041"/>
    </source>
</evidence>
<evidence type="ECO:0000255" key="4">
    <source>
        <dbReference type="PROSITE-ProRule" id="PRU00104"/>
    </source>
</evidence>
<evidence type="ECO:0000255" key="5">
    <source>
        <dbReference type="PROSITE-ProRule" id="PRU00224"/>
    </source>
</evidence>
<evidence type="ECO:0000256" key="6">
    <source>
        <dbReference type="SAM" id="MobiDB-lite"/>
    </source>
</evidence>
<evidence type="ECO:0000269" key="7">
    <source>
    </source>
</evidence>
<evidence type="ECO:0000269" key="8">
    <source>
    </source>
</evidence>
<evidence type="ECO:0000269" key="9">
    <source>
    </source>
</evidence>
<evidence type="ECO:0000269" key="10">
    <source>
    </source>
</evidence>
<accession>Q9DBH0</accession>
<accession>Q8BTG4</accession>
<accession>Q923F6</accession>
<sequence length="870" mass="98761">MASASSSRAGVALPFEKSQLTLKVVSAKPKVHNRQPRINSYVEVAVDGLPSETKKTGKRIGSSELLWNEIIVLNVTAQSHLDLKVWSCHTLRNELLGTASVNLSNVLKNNGGKMENTQLTLNLQTENKGSVVSGGELTIFLDGPTVDLGSVPNGSAVTDGSQPPSRESSGTAIAPETRHQPPSTNCFGGRSRTHRHSGGSARTATAASEQSPGARNRHRQPVKNSSSSGLANGTVNEEPTPASEPEESSVVGVTSLPAAALSVSSNPNTTSLPAQSTPAEGEEASTSGTQQLPAAAQAPDALPAGWEQRELPNGRVYYVDHNTKTTTWERPLPPGWEKRTDPRGRFYYVDHNTRTTTWQRPTAEYVRNYEQWQSQRNQLQGAMQHFSQRFLYQSSSASTDHDPLGPLPPGWEKRQDNGRVYYVNHNTRTTQWEDPRTQGMIQEPALPPGWEMKYTSEGVRYFVDHNTRTTTFKDPRPGFESGTKQGSPGAYDRSFRWKYHQFRFLCHSNALPSHVKISVSRQTLFEDSFQQIMNMKPYDLRRRLYIIMRGEEGLDYGGIAREWFFLLSHEVLNPMYCLFEYAGKNNYCLQINPASSINPDHLTYFRFIGRFIAMALYHGKFIDTGFTLPFYKRMLNKRPTLKDLESIDPEFYNSIVWIKENNLEECGLELFFIQDMEILGKVTTHELKEGGENIRVTEENKEEYIMLLTDWRFTRGVEEQTKAFLDGFNEVAPLEWLRYFDEKELELMLCGMQEIDMSDWQKNAIYRHYTKSSKQIQWFWQVVKEMDNEKRIRLLQFVTGTCRLPVGGFAELIGSNGPQKFCIDRVGKETWLPRSHTCFNRLDLPPYKSYEQLKEKLLYAIEETEGFGQE</sequence>
<gene>
    <name type="primary">Wwp2</name>
</gene>
<organism>
    <name type="scientific">Mus musculus</name>
    <name type="common">Mouse</name>
    <dbReference type="NCBI Taxonomy" id="10090"/>
    <lineage>
        <taxon>Eukaryota</taxon>
        <taxon>Metazoa</taxon>
        <taxon>Chordata</taxon>
        <taxon>Craniata</taxon>
        <taxon>Vertebrata</taxon>
        <taxon>Euteleostomi</taxon>
        <taxon>Mammalia</taxon>
        <taxon>Eutheria</taxon>
        <taxon>Euarchontoglires</taxon>
        <taxon>Glires</taxon>
        <taxon>Rodentia</taxon>
        <taxon>Myomorpha</taxon>
        <taxon>Muroidea</taxon>
        <taxon>Muridae</taxon>
        <taxon>Murinae</taxon>
        <taxon>Mus</taxon>
        <taxon>Mus</taxon>
    </lineage>
</organism>
<dbReference type="EC" id="2.3.2.26"/>
<dbReference type="EMBL" id="AK004962">
    <property type="protein sequence ID" value="BAB23702.1"/>
    <property type="molecule type" value="mRNA"/>
</dbReference>
<dbReference type="EMBL" id="AK088936">
    <property type="protein sequence ID" value="BAC40661.1"/>
    <property type="molecule type" value="mRNA"/>
</dbReference>
<dbReference type="EMBL" id="AK090392">
    <property type="protein sequence ID" value="BAC41195.1"/>
    <property type="molecule type" value="mRNA"/>
</dbReference>
<dbReference type="EMBL" id="BC004712">
    <property type="protein sequence ID" value="AAH04712.1"/>
    <property type="molecule type" value="mRNA"/>
</dbReference>
<dbReference type="EMBL" id="BC039921">
    <property type="protein sequence ID" value="AAH39921.1"/>
    <property type="molecule type" value="mRNA"/>
</dbReference>
<dbReference type="EMBL" id="BC048184">
    <property type="protein sequence ID" value="AAH48184.1"/>
    <property type="molecule type" value="mRNA"/>
</dbReference>
<dbReference type="CCDS" id="CCDS40467.1"/>
<dbReference type="RefSeq" id="NP_080106.1">
    <property type="nucleotide sequence ID" value="NM_025830.4"/>
</dbReference>
<dbReference type="RefSeq" id="XP_006531362.1">
    <property type="nucleotide sequence ID" value="XM_006531299.5"/>
</dbReference>
<dbReference type="SMR" id="Q9DBH0"/>
<dbReference type="BioGRID" id="211793">
    <property type="interactions" value="20"/>
</dbReference>
<dbReference type="FunCoup" id="Q9DBH0">
    <property type="interactions" value="4920"/>
</dbReference>
<dbReference type="IntAct" id="Q9DBH0">
    <property type="interactions" value="1"/>
</dbReference>
<dbReference type="STRING" id="10090.ENSMUSP00000132224"/>
<dbReference type="GlyGen" id="Q9DBH0">
    <property type="glycosylation" value="3 sites, 1 O-linked glycan (1 site)"/>
</dbReference>
<dbReference type="iPTMnet" id="Q9DBH0"/>
<dbReference type="PhosphoSitePlus" id="Q9DBH0"/>
<dbReference type="jPOST" id="Q9DBH0"/>
<dbReference type="PaxDb" id="10090-ENSMUSP00000132224"/>
<dbReference type="ProteomicsDB" id="275223"/>
<dbReference type="Pumba" id="Q9DBH0"/>
<dbReference type="Antibodypedia" id="29892">
    <property type="antibodies" value="209 antibodies from 25 providers"/>
</dbReference>
<dbReference type="DNASU" id="66894"/>
<dbReference type="Ensembl" id="ENSMUST00000166615.3">
    <property type="protein sequence ID" value="ENSMUSP00000132224.2"/>
    <property type="gene ID" value="ENSMUSG00000031930.12"/>
</dbReference>
<dbReference type="GeneID" id="66894"/>
<dbReference type="KEGG" id="mmu:66894"/>
<dbReference type="UCSC" id="uc009nhv.1">
    <property type="organism name" value="mouse"/>
</dbReference>
<dbReference type="AGR" id="MGI:1914144"/>
<dbReference type="CTD" id="11060"/>
<dbReference type="MGI" id="MGI:1914144">
    <property type="gene designation" value="Wwp2"/>
</dbReference>
<dbReference type="VEuPathDB" id="HostDB:ENSMUSG00000031930"/>
<dbReference type="eggNOG" id="KOG0940">
    <property type="taxonomic scope" value="Eukaryota"/>
</dbReference>
<dbReference type="GeneTree" id="ENSGT00940000160726"/>
<dbReference type="HOGENOM" id="CLU_002173_0_1_1"/>
<dbReference type="InParanoid" id="Q9DBH0"/>
<dbReference type="OMA" id="GWCEGSS"/>
<dbReference type="OrthoDB" id="423283at2759"/>
<dbReference type="PhylomeDB" id="Q9DBH0"/>
<dbReference type="TreeFam" id="TF323658"/>
<dbReference type="Reactome" id="R-MMU-8948751">
    <property type="pathway name" value="Regulation of PTEN stability and activity"/>
</dbReference>
<dbReference type="Reactome" id="R-MMU-9013406">
    <property type="pathway name" value="RHOQ GTPase cycle"/>
</dbReference>
<dbReference type="Reactome" id="R-MMU-9013420">
    <property type="pathway name" value="RHOU GTPase cycle"/>
</dbReference>
<dbReference type="Reactome" id="R-MMU-9013507">
    <property type="pathway name" value="NOTCH3 Activation and Transmission of Signal to the Nucleus"/>
</dbReference>
<dbReference type="UniPathway" id="UPA00143"/>
<dbReference type="BioGRID-ORCS" id="66894">
    <property type="hits" value="6 hits in 79 CRISPR screens"/>
</dbReference>
<dbReference type="ChiTaRS" id="Wwp2">
    <property type="organism name" value="mouse"/>
</dbReference>
<dbReference type="PRO" id="PR:Q9DBH0"/>
<dbReference type="Proteomes" id="UP000000589">
    <property type="component" value="Chromosome 8"/>
</dbReference>
<dbReference type="RNAct" id="Q9DBH0">
    <property type="molecule type" value="protein"/>
</dbReference>
<dbReference type="Bgee" id="ENSMUSG00000031930">
    <property type="expression patterns" value="Expressed in head bone and 319 other cell types or tissues"/>
</dbReference>
<dbReference type="ExpressionAtlas" id="Q9DBH0">
    <property type="expression patterns" value="baseline and differential"/>
</dbReference>
<dbReference type="GO" id="GO:0005737">
    <property type="term" value="C:cytoplasm"/>
    <property type="evidence" value="ECO:0000314"/>
    <property type="project" value="BHF-UCL"/>
</dbReference>
<dbReference type="GO" id="GO:0005576">
    <property type="term" value="C:extracellular region"/>
    <property type="evidence" value="ECO:0007669"/>
    <property type="project" value="GOC"/>
</dbReference>
<dbReference type="GO" id="GO:0005634">
    <property type="term" value="C:nucleus"/>
    <property type="evidence" value="ECO:0000314"/>
    <property type="project" value="BHF-UCL"/>
</dbReference>
<dbReference type="GO" id="GO:0019870">
    <property type="term" value="F:potassium channel inhibitor activity"/>
    <property type="evidence" value="ECO:0007669"/>
    <property type="project" value="Ensembl"/>
</dbReference>
<dbReference type="GO" id="GO:0061629">
    <property type="term" value="F:RNA polymerase II-specific DNA-binding transcription factor binding"/>
    <property type="evidence" value="ECO:0000316"/>
    <property type="project" value="MGI"/>
</dbReference>
<dbReference type="GO" id="GO:0140416">
    <property type="term" value="F:transcription regulator inhibitor activity"/>
    <property type="evidence" value="ECO:0000314"/>
    <property type="project" value="BHF-UCL"/>
</dbReference>
<dbReference type="GO" id="GO:0044325">
    <property type="term" value="F:transmembrane transporter binding"/>
    <property type="evidence" value="ECO:0007669"/>
    <property type="project" value="Ensembl"/>
</dbReference>
<dbReference type="GO" id="GO:0061630">
    <property type="term" value="F:ubiquitin protein ligase activity"/>
    <property type="evidence" value="ECO:0000314"/>
    <property type="project" value="BHF-UCL"/>
</dbReference>
<dbReference type="GO" id="GO:0004842">
    <property type="term" value="F:ubiquitin-protein transferase activity"/>
    <property type="evidence" value="ECO:0000314"/>
    <property type="project" value="UniProtKB"/>
</dbReference>
<dbReference type="GO" id="GO:0006858">
    <property type="term" value="P:extracellular transport"/>
    <property type="evidence" value="ECO:0007669"/>
    <property type="project" value="Ensembl"/>
</dbReference>
<dbReference type="GO" id="GO:0045892">
    <property type="term" value="P:negative regulation of DNA-templated transcription"/>
    <property type="evidence" value="ECO:0000314"/>
    <property type="project" value="BHF-UCL"/>
</dbReference>
<dbReference type="GO" id="GO:0010629">
    <property type="term" value="P:negative regulation of gene expression"/>
    <property type="evidence" value="ECO:0007669"/>
    <property type="project" value="Ensembl"/>
</dbReference>
<dbReference type="GO" id="GO:1903765">
    <property type="term" value="P:negative regulation of potassium ion export across plasma membrane"/>
    <property type="evidence" value="ECO:0007669"/>
    <property type="project" value="Ensembl"/>
</dbReference>
<dbReference type="GO" id="GO:0051224">
    <property type="term" value="P:negative regulation of protein transport"/>
    <property type="evidence" value="ECO:0007669"/>
    <property type="project" value="Ensembl"/>
</dbReference>
<dbReference type="GO" id="GO:0000122">
    <property type="term" value="P:negative regulation of transcription by RNA polymerase II"/>
    <property type="evidence" value="ECO:0000314"/>
    <property type="project" value="BHF-UCL"/>
</dbReference>
<dbReference type="GO" id="GO:0045944">
    <property type="term" value="P:positive regulation of transcription by RNA polymerase II"/>
    <property type="evidence" value="ECO:0000316"/>
    <property type="project" value="MGI"/>
</dbReference>
<dbReference type="GO" id="GO:0043161">
    <property type="term" value="P:proteasome-mediated ubiquitin-dependent protein catabolic process"/>
    <property type="evidence" value="ECO:0000315"/>
    <property type="project" value="UniProtKB"/>
</dbReference>
<dbReference type="GO" id="GO:0051865">
    <property type="term" value="P:protein autoubiquitination"/>
    <property type="evidence" value="ECO:0007669"/>
    <property type="project" value="Ensembl"/>
</dbReference>
<dbReference type="GO" id="GO:0070534">
    <property type="term" value="P:protein K63-linked ubiquitination"/>
    <property type="evidence" value="ECO:0000315"/>
    <property type="project" value="UniProtKB"/>
</dbReference>
<dbReference type="GO" id="GO:0016567">
    <property type="term" value="P:protein ubiquitination"/>
    <property type="evidence" value="ECO:0000314"/>
    <property type="project" value="BHF-UCL"/>
</dbReference>
<dbReference type="GO" id="GO:0042391">
    <property type="term" value="P:regulation of membrane potential"/>
    <property type="evidence" value="ECO:0007669"/>
    <property type="project" value="Ensembl"/>
</dbReference>
<dbReference type="GO" id="GO:0006366">
    <property type="term" value="P:transcription by RNA polymerase II"/>
    <property type="evidence" value="ECO:0000316"/>
    <property type="project" value="MGI"/>
</dbReference>
<dbReference type="CDD" id="cd04021">
    <property type="entry name" value="C2_E3_ubiquitin_ligase"/>
    <property type="match status" value="1"/>
</dbReference>
<dbReference type="CDD" id="cd00078">
    <property type="entry name" value="HECTc"/>
    <property type="match status" value="1"/>
</dbReference>
<dbReference type="CDD" id="cd00201">
    <property type="entry name" value="WW"/>
    <property type="match status" value="4"/>
</dbReference>
<dbReference type="FunFam" id="2.20.70.10:FF:000005">
    <property type="entry name" value="E3 ubiquitin-protein ligase"/>
    <property type="match status" value="1"/>
</dbReference>
<dbReference type="FunFam" id="2.20.70.10:FF:000009">
    <property type="entry name" value="E3 ubiquitin-protein ligase"/>
    <property type="match status" value="1"/>
</dbReference>
<dbReference type="FunFam" id="2.20.70.10:FF:000023">
    <property type="entry name" value="E3 ubiquitin-protein ligase"/>
    <property type="match status" value="1"/>
</dbReference>
<dbReference type="FunFam" id="2.60.40.150:FF:000082">
    <property type="entry name" value="E3 ubiquitin-protein ligase"/>
    <property type="match status" value="1"/>
</dbReference>
<dbReference type="FunFam" id="3.30.2160.10:FF:000003">
    <property type="entry name" value="E3 ubiquitin-protein ligase"/>
    <property type="match status" value="1"/>
</dbReference>
<dbReference type="FunFam" id="3.90.1750.10:FF:000002">
    <property type="entry name" value="E3 ubiquitin-protein ligase"/>
    <property type="match status" value="1"/>
</dbReference>
<dbReference type="FunFam" id="3.90.1750.10:FF:000026">
    <property type="entry name" value="E3 ubiquitin-protein ligase HACE1"/>
    <property type="match status" value="1"/>
</dbReference>
<dbReference type="FunFam" id="3.30.2410.10:FF:000002">
    <property type="entry name" value="E3 ubiquitin-protein ligase HECW2"/>
    <property type="match status" value="1"/>
</dbReference>
<dbReference type="Gene3D" id="2.20.70.10">
    <property type="match status" value="3"/>
</dbReference>
<dbReference type="Gene3D" id="2.60.40.150">
    <property type="entry name" value="C2 domain"/>
    <property type="match status" value="1"/>
</dbReference>
<dbReference type="Gene3D" id="3.30.2160.10">
    <property type="entry name" value="Hect, E3 ligase catalytic domain"/>
    <property type="match status" value="1"/>
</dbReference>
<dbReference type="Gene3D" id="3.30.2410.10">
    <property type="entry name" value="Hect, E3 ligase catalytic domain"/>
    <property type="match status" value="1"/>
</dbReference>
<dbReference type="Gene3D" id="3.90.1750.10">
    <property type="entry name" value="Hect, E3 ligase catalytic domains"/>
    <property type="match status" value="1"/>
</dbReference>
<dbReference type="InterPro" id="IPR000008">
    <property type="entry name" value="C2_dom"/>
</dbReference>
<dbReference type="InterPro" id="IPR035892">
    <property type="entry name" value="C2_domain_sf"/>
</dbReference>
<dbReference type="InterPro" id="IPR024928">
    <property type="entry name" value="E3_ub_ligase_SMURF1"/>
</dbReference>
<dbReference type="InterPro" id="IPR050409">
    <property type="entry name" value="E3_ubiq-protein_ligase"/>
</dbReference>
<dbReference type="InterPro" id="IPR000569">
    <property type="entry name" value="HECT_dom"/>
</dbReference>
<dbReference type="InterPro" id="IPR035983">
    <property type="entry name" value="Hect_E3_ubiquitin_ligase"/>
</dbReference>
<dbReference type="InterPro" id="IPR001202">
    <property type="entry name" value="WW_dom"/>
</dbReference>
<dbReference type="InterPro" id="IPR036020">
    <property type="entry name" value="WW_dom_sf"/>
</dbReference>
<dbReference type="PANTHER" id="PTHR11254">
    <property type="entry name" value="HECT DOMAIN UBIQUITIN-PROTEIN LIGASE"/>
    <property type="match status" value="1"/>
</dbReference>
<dbReference type="PANTHER" id="PTHR11254:SF396">
    <property type="entry name" value="NEDD4-LIKE E3 UBIQUITIN-PROTEIN LIGASE WWP2"/>
    <property type="match status" value="1"/>
</dbReference>
<dbReference type="Pfam" id="PF00632">
    <property type="entry name" value="HECT"/>
    <property type="match status" value="1"/>
</dbReference>
<dbReference type="Pfam" id="PF00397">
    <property type="entry name" value="WW"/>
    <property type="match status" value="4"/>
</dbReference>
<dbReference type="PIRSF" id="PIRSF001569">
    <property type="entry name" value="E3_ub_ligase_SMURF1"/>
    <property type="match status" value="1"/>
</dbReference>
<dbReference type="SMART" id="SM00239">
    <property type="entry name" value="C2"/>
    <property type="match status" value="1"/>
</dbReference>
<dbReference type="SMART" id="SM00119">
    <property type="entry name" value="HECTc"/>
    <property type="match status" value="1"/>
</dbReference>
<dbReference type="SMART" id="SM00456">
    <property type="entry name" value="WW"/>
    <property type="match status" value="4"/>
</dbReference>
<dbReference type="SUPFAM" id="SSF49562">
    <property type="entry name" value="C2 domain (Calcium/lipid-binding domain, CaLB)"/>
    <property type="match status" value="1"/>
</dbReference>
<dbReference type="SUPFAM" id="SSF56204">
    <property type="entry name" value="Hect, E3 ligase catalytic domain"/>
    <property type="match status" value="1"/>
</dbReference>
<dbReference type="SUPFAM" id="SSF51045">
    <property type="entry name" value="WW domain"/>
    <property type="match status" value="4"/>
</dbReference>
<dbReference type="PROSITE" id="PS50004">
    <property type="entry name" value="C2"/>
    <property type="match status" value="1"/>
</dbReference>
<dbReference type="PROSITE" id="PS50237">
    <property type="entry name" value="HECT"/>
    <property type="match status" value="1"/>
</dbReference>
<dbReference type="PROSITE" id="PS01159">
    <property type="entry name" value="WW_DOMAIN_1"/>
    <property type="match status" value="4"/>
</dbReference>
<dbReference type="PROSITE" id="PS50020">
    <property type="entry name" value="WW_DOMAIN_2"/>
    <property type="match status" value="4"/>
</dbReference>
<name>WWP2_MOUSE</name>
<protein>
    <recommendedName>
        <fullName>NEDD4-like E3 ubiquitin-protein ligase WWP2</fullName>
        <ecNumber>2.3.2.26</ecNumber>
    </recommendedName>
    <alternativeName>
        <fullName>HECT-type E3 ubiquitin transferase WWP2</fullName>
    </alternativeName>
    <alternativeName>
        <fullName>WW domain-containing protein 2</fullName>
    </alternativeName>
</protein>
<reference key="1">
    <citation type="journal article" date="2005" name="Science">
        <title>The transcriptional landscape of the mammalian genome.</title>
        <authorList>
            <person name="Carninci P."/>
            <person name="Kasukawa T."/>
            <person name="Katayama S."/>
            <person name="Gough J."/>
            <person name="Frith M.C."/>
            <person name="Maeda N."/>
            <person name="Oyama R."/>
            <person name="Ravasi T."/>
            <person name="Lenhard B."/>
            <person name="Wells C."/>
            <person name="Kodzius R."/>
            <person name="Shimokawa K."/>
            <person name="Bajic V.B."/>
            <person name="Brenner S.E."/>
            <person name="Batalov S."/>
            <person name="Forrest A.R."/>
            <person name="Zavolan M."/>
            <person name="Davis M.J."/>
            <person name="Wilming L.G."/>
            <person name="Aidinis V."/>
            <person name="Allen J.E."/>
            <person name="Ambesi-Impiombato A."/>
            <person name="Apweiler R."/>
            <person name="Aturaliya R.N."/>
            <person name="Bailey T.L."/>
            <person name="Bansal M."/>
            <person name="Baxter L."/>
            <person name="Beisel K.W."/>
            <person name="Bersano T."/>
            <person name="Bono H."/>
            <person name="Chalk A.M."/>
            <person name="Chiu K.P."/>
            <person name="Choudhary V."/>
            <person name="Christoffels A."/>
            <person name="Clutterbuck D.R."/>
            <person name="Crowe M.L."/>
            <person name="Dalla E."/>
            <person name="Dalrymple B.P."/>
            <person name="de Bono B."/>
            <person name="Della Gatta G."/>
            <person name="di Bernardo D."/>
            <person name="Down T."/>
            <person name="Engstrom P."/>
            <person name="Fagiolini M."/>
            <person name="Faulkner G."/>
            <person name="Fletcher C.F."/>
            <person name="Fukushima T."/>
            <person name="Furuno M."/>
            <person name="Futaki S."/>
            <person name="Gariboldi M."/>
            <person name="Georgii-Hemming P."/>
            <person name="Gingeras T.R."/>
            <person name="Gojobori T."/>
            <person name="Green R.E."/>
            <person name="Gustincich S."/>
            <person name="Harbers M."/>
            <person name="Hayashi Y."/>
            <person name="Hensch T.K."/>
            <person name="Hirokawa N."/>
            <person name="Hill D."/>
            <person name="Huminiecki L."/>
            <person name="Iacono M."/>
            <person name="Ikeo K."/>
            <person name="Iwama A."/>
            <person name="Ishikawa T."/>
            <person name="Jakt M."/>
            <person name="Kanapin A."/>
            <person name="Katoh M."/>
            <person name="Kawasawa Y."/>
            <person name="Kelso J."/>
            <person name="Kitamura H."/>
            <person name="Kitano H."/>
            <person name="Kollias G."/>
            <person name="Krishnan S.P."/>
            <person name="Kruger A."/>
            <person name="Kummerfeld S.K."/>
            <person name="Kurochkin I.V."/>
            <person name="Lareau L.F."/>
            <person name="Lazarevic D."/>
            <person name="Lipovich L."/>
            <person name="Liu J."/>
            <person name="Liuni S."/>
            <person name="McWilliam S."/>
            <person name="Madan Babu M."/>
            <person name="Madera M."/>
            <person name="Marchionni L."/>
            <person name="Matsuda H."/>
            <person name="Matsuzawa S."/>
            <person name="Miki H."/>
            <person name="Mignone F."/>
            <person name="Miyake S."/>
            <person name="Morris K."/>
            <person name="Mottagui-Tabar S."/>
            <person name="Mulder N."/>
            <person name="Nakano N."/>
            <person name="Nakauchi H."/>
            <person name="Ng P."/>
            <person name="Nilsson R."/>
            <person name="Nishiguchi S."/>
            <person name="Nishikawa S."/>
            <person name="Nori F."/>
            <person name="Ohara O."/>
            <person name="Okazaki Y."/>
            <person name="Orlando V."/>
            <person name="Pang K.C."/>
            <person name="Pavan W.J."/>
            <person name="Pavesi G."/>
            <person name="Pesole G."/>
            <person name="Petrovsky N."/>
            <person name="Piazza S."/>
            <person name="Reed J."/>
            <person name="Reid J.F."/>
            <person name="Ring B.Z."/>
            <person name="Ringwald M."/>
            <person name="Rost B."/>
            <person name="Ruan Y."/>
            <person name="Salzberg S.L."/>
            <person name="Sandelin A."/>
            <person name="Schneider C."/>
            <person name="Schoenbach C."/>
            <person name="Sekiguchi K."/>
            <person name="Semple C.A."/>
            <person name="Seno S."/>
            <person name="Sessa L."/>
            <person name="Sheng Y."/>
            <person name="Shibata Y."/>
            <person name="Shimada H."/>
            <person name="Shimada K."/>
            <person name="Silva D."/>
            <person name="Sinclair B."/>
            <person name="Sperling S."/>
            <person name="Stupka E."/>
            <person name="Sugiura K."/>
            <person name="Sultana R."/>
            <person name="Takenaka Y."/>
            <person name="Taki K."/>
            <person name="Tammoja K."/>
            <person name="Tan S.L."/>
            <person name="Tang S."/>
            <person name="Taylor M.S."/>
            <person name="Tegner J."/>
            <person name="Teichmann S.A."/>
            <person name="Ueda H.R."/>
            <person name="van Nimwegen E."/>
            <person name="Verardo R."/>
            <person name="Wei C.L."/>
            <person name="Yagi K."/>
            <person name="Yamanishi H."/>
            <person name="Zabarovsky E."/>
            <person name="Zhu S."/>
            <person name="Zimmer A."/>
            <person name="Hide W."/>
            <person name="Bult C."/>
            <person name="Grimmond S.M."/>
            <person name="Teasdale R.D."/>
            <person name="Liu E.T."/>
            <person name="Brusic V."/>
            <person name="Quackenbush J."/>
            <person name="Wahlestedt C."/>
            <person name="Mattick J.S."/>
            <person name="Hume D.A."/>
            <person name="Kai C."/>
            <person name="Sasaki D."/>
            <person name="Tomaru Y."/>
            <person name="Fukuda S."/>
            <person name="Kanamori-Katayama M."/>
            <person name="Suzuki M."/>
            <person name="Aoki J."/>
            <person name="Arakawa T."/>
            <person name="Iida J."/>
            <person name="Imamura K."/>
            <person name="Itoh M."/>
            <person name="Kato T."/>
            <person name="Kawaji H."/>
            <person name="Kawagashira N."/>
            <person name="Kawashima T."/>
            <person name="Kojima M."/>
            <person name="Kondo S."/>
            <person name="Konno H."/>
            <person name="Nakano K."/>
            <person name="Ninomiya N."/>
            <person name="Nishio T."/>
            <person name="Okada M."/>
            <person name="Plessy C."/>
            <person name="Shibata K."/>
            <person name="Shiraki T."/>
            <person name="Suzuki S."/>
            <person name="Tagami M."/>
            <person name="Waki K."/>
            <person name="Watahiki A."/>
            <person name="Okamura-Oho Y."/>
            <person name="Suzuki H."/>
            <person name="Kawai J."/>
            <person name="Hayashizaki Y."/>
        </authorList>
    </citation>
    <scope>NUCLEOTIDE SEQUENCE [LARGE SCALE MRNA]</scope>
    <source>
        <strain>C57BL/6J</strain>
        <strain>NOD</strain>
        <tissue>Brain</tissue>
        <tissue>Liver</tissue>
        <tissue>Thymus</tissue>
    </source>
</reference>
<reference key="2">
    <citation type="journal article" date="2004" name="Genome Res.">
        <title>The status, quality, and expansion of the NIH full-length cDNA project: the Mammalian Gene Collection (MGC).</title>
        <authorList>
            <consortium name="The MGC Project Team"/>
        </authorList>
    </citation>
    <scope>NUCLEOTIDE SEQUENCE [LARGE SCALE MRNA]</scope>
    <source>
        <strain>C57BL/6J</strain>
        <strain>FVB/N</strain>
        <tissue>Brain</tissue>
        <tissue>Mammary tumor</tissue>
    </source>
</reference>
<reference key="3">
    <citation type="journal article" date="2007" name="Mol. Cell. Biol.">
        <title>Wwp2-mediated ubiquitination of the RNA polymerase II large subunit in mouse embryonic pluripotent stem cells.</title>
        <authorList>
            <person name="Li H."/>
            <person name="Zhang Z."/>
            <person name="Wang B."/>
            <person name="Zhang J."/>
            <person name="Zhao Y."/>
            <person name="Jin Y."/>
        </authorList>
    </citation>
    <scope>FUNCTION IN UBIQUITINATION OF RPB1</scope>
    <scope>INTERACTION WITH RBP1</scope>
</reference>
<reference key="4">
    <citation type="journal article" date="2008" name="Blood">
        <title>Regulation of the divalent metal ion transporter DMT1 and iron homeostasis by a ubiquitin-dependent mechanism involving Ndfips and WWP2.</title>
        <authorList>
            <person name="Foot N.J."/>
            <person name="Dalton H.E."/>
            <person name="Shearwin-Whyatt L.M."/>
            <person name="Dorstyn L."/>
            <person name="Tan S.S."/>
            <person name="Yang B."/>
            <person name="Kumar S."/>
        </authorList>
    </citation>
    <scope>FUNCTION IN UBIQUITINATION OF SLC11A2</scope>
    <scope>INTERACTION WITH SLC11A2</scope>
</reference>
<reference key="5">
    <citation type="journal article" date="2009" name="Mol. Cell. Biol.">
        <title>The HECT-type E3 ubiquitin ligase AIP2 inhibits activation-induced T-cell death by catalyzing EGR2 ubiquitination.</title>
        <authorList>
            <person name="Chen A."/>
            <person name="Gao B."/>
            <person name="Zhang J."/>
            <person name="McEwen T."/>
            <person name="Ye S.Q."/>
            <person name="Zhang D."/>
            <person name="Fang D."/>
        </authorList>
    </citation>
    <scope>FUNCTION IN UBIQUITINATION OF EGR2</scope>
    <scope>INTERACTION WITH EGR2</scope>
</reference>
<reference key="6">
    <citation type="journal article" date="2010" name="Cell Res.">
        <title>Wwp2 mediates Oct4 ubiquitination and its own auto-ubiquitination in a dosage-dependent manner.</title>
        <authorList>
            <person name="Liao B."/>
            <person name="Jin Y."/>
        </authorList>
    </citation>
    <scope>FUNCTION IN UBIQUITINATION OF POU5F1</scope>
    <scope>AUTOUBIQUITINATION</scope>
</reference>
<keyword id="KW-0539">Nucleus</keyword>
<keyword id="KW-0597">Phosphoprotein</keyword>
<keyword id="KW-1185">Reference proteome</keyword>
<keyword id="KW-0677">Repeat</keyword>
<keyword id="KW-0808">Transferase</keyword>
<keyword id="KW-0832">Ubl conjugation</keyword>
<keyword id="KW-0833">Ubl conjugation pathway</keyword>